<evidence type="ECO:0000255" key="1">
    <source>
        <dbReference type="HAMAP-Rule" id="MF_00014"/>
    </source>
</evidence>
<evidence type="ECO:0000256" key="2">
    <source>
        <dbReference type="SAM" id="MobiDB-lite"/>
    </source>
</evidence>
<keyword id="KW-0143">Chaperone</keyword>
<keyword id="KW-0963">Cytoplasm</keyword>
<keyword id="KW-0690">Ribosome biogenesis</keyword>
<keyword id="KW-0698">rRNA processing</keyword>
<reference key="1">
    <citation type="journal article" date="2002" name="Proc. Natl. Acad. Sci. U.S.A.">
        <title>The genome sequence of the facultative intracellular pathogen Brucella melitensis.</title>
        <authorList>
            <person name="DelVecchio V.G."/>
            <person name="Kapatral V."/>
            <person name="Redkar R.J."/>
            <person name="Patra G."/>
            <person name="Mujer C."/>
            <person name="Los T."/>
            <person name="Ivanova N."/>
            <person name="Anderson I."/>
            <person name="Bhattacharyya A."/>
            <person name="Lykidis A."/>
            <person name="Reznik G."/>
            <person name="Jablonski L."/>
            <person name="Larsen N."/>
            <person name="D'Souza M."/>
            <person name="Bernal A."/>
            <person name="Mazur M."/>
            <person name="Goltsman E."/>
            <person name="Selkov E."/>
            <person name="Elzer P.H."/>
            <person name="Hagius S."/>
            <person name="O'Callaghan D."/>
            <person name="Letesson J.-J."/>
            <person name="Haselkorn R."/>
            <person name="Kyrpides N.C."/>
            <person name="Overbeek R."/>
        </authorList>
    </citation>
    <scope>NUCLEOTIDE SEQUENCE [LARGE SCALE GENOMIC DNA]</scope>
    <source>
        <strain>ATCC 23456 / CCUG 17765 / NCTC 10094 / 16M</strain>
    </source>
</reference>
<comment type="function">
    <text evidence="1">An accessory protein needed during the final step in the assembly of 30S ribosomal subunit, possibly for assembly of the head region. Essential for efficient processing of 16S rRNA. May be needed both before and after RbfA during the maturation of 16S rRNA. It has affinity for free ribosomal 30S subunits but not for 70S ribosomes.</text>
</comment>
<comment type="subunit">
    <text evidence="1">Binds ribosomal protein uS19.</text>
</comment>
<comment type="subcellular location">
    <subcellularLocation>
        <location evidence="1">Cytoplasm</location>
    </subcellularLocation>
</comment>
<comment type="domain">
    <text evidence="1">The PRC barrel domain binds ribosomal protein uS19.</text>
</comment>
<comment type="similarity">
    <text evidence="1">Belongs to the RimM family.</text>
</comment>
<proteinExistence type="inferred from homology"/>
<accession>P66651</accession>
<accession>Q8YJD8</accession>
<dbReference type="EMBL" id="AE008917">
    <property type="protein sequence ID" value="AAL51330.1"/>
    <property type="molecule type" value="Genomic_DNA"/>
</dbReference>
<dbReference type="PIR" id="AG3270">
    <property type="entry name" value="AG3270"/>
</dbReference>
<dbReference type="RefSeq" id="WP_002964983.1">
    <property type="nucleotide sequence ID" value="NZ_GG703778.1"/>
</dbReference>
<dbReference type="SMR" id="P66651"/>
<dbReference type="GeneID" id="93017753"/>
<dbReference type="KEGG" id="bme:BMEI0148"/>
<dbReference type="KEGG" id="bmel:DK63_1287"/>
<dbReference type="PATRIC" id="fig|224914.52.peg.1358"/>
<dbReference type="eggNOG" id="COG0806">
    <property type="taxonomic scope" value="Bacteria"/>
</dbReference>
<dbReference type="PhylomeDB" id="P66651"/>
<dbReference type="Proteomes" id="UP000000419">
    <property type="component" value="Chromosome I"/>
</dbReference>
<dbReference type="GO" id="GO:0005737">
    <property type="term" value="C:cytoplasm"/>
    <property type="evidence" value="ECO:0007669"/>
    <property type="project" value="UniProtKB-SubCell"/>
</dbReference>
<dbReference type="GO" id="GO:0005840">
    <property type="term" value="C:ribosome"/>
    <property type="evidence" value="ECO:0007669"/>
    <property type="project" value="InterPro"/>
</dbReference>
<dbReference type="GO" id="GO:0043022">
    <property type="term" value="F:ribosome binding"/>
    <property type="evidence" value="ECO:0007669"/>
    <property type="project" value="InterPro"/>
</dbReference>
<dbReference type="GO" id="GO:0042274">
    <property type="term" value="P:ribosomal small subunit biogenesis"/>
    <property type="evidence" value="ECO:0007669"/>
    <property type="project" value="UniProtKB-UniRule"/>
</dbReference>
<dbReference type="GO" id="GO:0006364">
    <property type="term" value="P:rRNA processing"/>
    <property type="evidence" value="ECO:0007669"/>
    <property type="project" value="UniProtKB-UniRule"/>
</dbReference>
<dbReference type="Gene3D" id="2.30.30.240">
    <property type="entry name" value="PRC-barrel domain"/>
    <property type="match status" value="1"/>
</dbReference>
<dbReference type="Gene3D" id="2.40.30.60">
    <property type="entry name" value="RimM"/>
    <property type="match status" value="1"/>
</dbReference>
<dbReference type="HAMAP" id="MF_00014">
    <property type="entry name" value="Ribosome_mat_RimM"/>
    <property type="match status" value="1"/>
</dbReference>
<dbReference type="InterPro" id="IPR011033">
    <property type="entry name" value="PRC_barrel-like_sf"/>
</dbReference>
<dbReference type="InterPro" id="IPR056792">
    <property type="entry name" value="PRC_RimM"/>
</dbReference>
<dbReference type="InterPro" id="IPR011961">
    <property type="entry name" value="RimM"/>
</dbReference>
<dbReference type="InterPro" id="IPR002676">
    <property type="entry name" value="RimM_N"/>
</dbReference>
<dbReference type="InterPro" id="IPR036976">
    <property type="entry name" value="RimM_N_sf"/>
</dbReference>
<dbReference type="InterPro" id="IPR009000">
    <property type="entry name" value="Transl_B-barrel_sf"/>
</dbReference>
<dbReference type="NCBIfam" id="TIGR02273">
    <property type="entry name" value="16S_RimM"/>
    <property type="match status" value="1"/>
</dbReference>
<dbReference type="PANTHER" id="PTHR33692">
    <property type="entry name" value="RIBOSOME MATURATION FACTOR RIMM"/>
    <property type="match status" value="1"/>
</dbReference>
<dbReference type="PANTHER" id="PTHR33692:SF1">
    <property type="entry name" value="RIBOSOME MATURATION FACTOR RIMM"/>
    <property type="match status" value="1"/>
</dbReference>
<dbReference type="Pfam" id="PF24986">
    <property type="entry name" value="PRC_RimM"/>
    <property type="match status" value="1"/>
</dbReference>
<dbReference type="Pfam" id="PF01782">
    <property type="entry name" value="RimM"/>
    <property type="match status" value="1"/>
</dbReference>
<dbReference type="SUPFAM" id="SSF50346">
    <property type="entry name" value="PRC-barrel domain"/>
    <property type="match status" value="1"/>
</dbReference>
<dbReference type="SUPFAM" id="SSF50447">
    <property type="entry name" value="Translation proteins"/>
    <property type="match status" value="1"/>
</dbReference>
<protein>
    <recommendedName>
        <fullName evidence="1">Ribosome maturation factor RimM</fullName>
    </recommendedName>
</protein>
<feature type="chain" id="PRO_0000163264" description="Ribosome maturation factor RimM">
    <location>
        <begin position="1"/>
        <end position="189"/>
    </location>
</feature>
<feature type="domain" description="PRC barrel" evidence="1">
    <location>
        <begin position="96"/>
        <end position="169"/>
    </location>
</feature>
<feature type="region of interest" description="Disordered" evidence="2">
    <location>
        <begin position="168"/>
        <end position="189"/>
    </location>
</feature>
<feature type="compositionally biased region" description="Basic and acidic residues" evidence="2">
    <location>
        <begin position="172"/>
        <end position="189"/>
    </location>
</feature>
<name>RIMM_BRUME</name>
<sequence length="189" mass="20554">MPRPENPIQLAVIGAAHGTRGEVRVKTFTGDPLAIADYGLLYDEQGKAYEILEARVAKTVVIVRFKGVNDRNAAEALNGTELFIDRSQLPDEELDEDEFFQTDLIGLEAVDGDGKSYGVVSAIFDFGGGDLIELSEKGKRPMLIPFTEAAVPEIDFDKGIIKVEPHAAGLIADEHDNPPHESGKKPKKP</sequence>
<organism>
    <name type="scientific">Brucella melitensis biotype 1 (strain ATCC 23456 / CCUG 17765 / NCTC 10094 / 16M)</name>
    <dbReference type="NCBI Taxonomy" id="224914"/>
    <lineage>
        <taxon>Bacteria</taxon>
        <taxon>Pseudomonadati</taxon>
        <taxon>Pseudomonadota</taxon>
        <taxon>Alphaproteobacteria</taxon>
        <taxon>Hyphomicrobiales</taxon>
        <taxon>Brucellaceae</taxon>
        <taxon>Brucella/Ochrobactrum group</taxon>
        <taxon>Brucella</taxon>
    </lineage>
</organism>
<gene>
    <name evidence="1" type="primary">rimM</name>
    <name type="ordered locus">BMEI0148</name>
</gene>